<keyword id="KW-0963">Cytoplasm</keyword>
<keyword id="KW-0408">Iron</keyword>
<keyword id="KW-0411">Iron-sulfur</keyword>
<keyword id="KW-0479">Metal-binding</keyword>
<keyword id="KW-0560">Oxidoreductase</keyword>
<comment type="function">
    <text evidence="1">Catalyzes the formation of sulfite from adenosine 5'-phosphosulfate (APS) using thioredoxin as an electron donor.</text>
</comment>
<comment type="catalytic activity">
    <reaction evidence="1">
        <text>[thioredoxin]-disulfide + sulfite + AMP + 2 H(+) = adenosine 5'-phosphosulfate + [thioredoxin]-dithiol</text>
        <dbReference type="Rhea" id="RHEA:21976"/>
        <dbReference type="Rhea" id="RHEA-COMP:10698"/>
        <dbReference type="Rhea" id="RHEA-COMP:10700"/>
        <dbReference type="ChEBI" id="CHEBI:15378"/>
        <dbReference type="ChEBI" id="CHEBI:17359"/>
        <dbReference type="ChEBI" id="CHEBI:29950"/>
        <dbReference type="ChEBI" id="CHEBI:50058"/>
        <dbReference type="ChEBI" id="CHEBI:58243"/>
        <dbReference type="ChEBI" id="CHEBI:456215"/>
        <dbReference type="EC" id="1.8.4.10"/>
    </reaction>
</comment>
<comment type="cofactor">
    <cofactor evidence="1">
        <name>[4Fe-4S] cluster</name>
        <dbReference type="ChEBI" id="CHEBI:49883"/>
    </cofactor>
    <text evidence="1">Binds 1 [4Fe-4S] cluster per subunit.</text>
</comment>
<comment type="pathway">
    <text evidence="1">Sulfur metabolism; hydrogen sulfide biosynthesis; sulfite from sulfate.</text>
</comment>
<comment type="subcellular location">
    <subcellularLocation>
        <location evidence="1">Cytoplasm</location>
    </subcellularLocation>
</comment>
<comment type="similarity">
    <text evidence="1">Belongs to the PAPS reductase family. CysH subfamily.</text>
</comment>
<organism>
    <name type="scientific">Anoxybacillus flavithermus (strain DSM 21510 / WK1)</name>
    <dbReference type="NCBI Taxonomy" id="491915"/>
    <lineage>
        <taxon>Bacteria</taxon>
        <taxon>Bacillati</taxon>
        <taxon>Bacillota</taxon>
        <taxon>Bacilli</taxon>
        <taxon>Bacillales</taxon>
        <taxon>Anoxybacillaceae</taxon>
        <taxon>Anoxybacillus</taxon>
    </lineage>
</organism>
<reference key="1">
    <citation type="journal article" date="2008" name="Genome Biol.">
        <title>Encapsulated in silica: genome, proteome and physiology of the thermophilic bacterium Anoxybacillus flavithermus WK1.</title>
        <authorList>
            <person name="Saw J.H."/>
            <person name="Mountain B.W."/>
            <person name="Feng L."/>
            <person name="Omelchenko M.V."/>
            <person name="Hou S."/>
            <person name="Saito J.A."/>
            <person name="Stott M.B."/>
            <person name="Li D."/>
            <person name="Zhao G."/>
            <person name="Wu J."/>
            <person name="Galperin M.Y."/>
            <person name="Koonin E.V."/>
            <person name="Makarova K.S."/>
            <person name="Wolf Y.I."/>
            <person name="Rigden D.J."/>
            <person name="Dunfield P.F."/>
            <person name="Wang L."/>
            <person name="Alam M."/>
        </authorList>
    </citation>
    <scope>NUCLEOTIDE SEQUENCE [LARGE SCALE GENOMIC DNA]</scope>
    <source>
        <strain>DSM 21510 / WK1</strain>
    </source>
</reference>
<proteinExistence type="inferred from homology"/>
<accession>B7GG21</accession>
<name>CYSH_ANOFW</name>
<evidence type="ECO:0000255" key="1">
    <source>
        <dbReference type="HAMAP-Rule" id="MF_00063"/>
    </source>
</evidence>
<sequence>MITYETWDIEQKPTFPIDNNEKGALHVLSWAYDHYSDDLLYACSFGIEGIVLIDLISQVRDDAEIVFLDTHLHFPETYETIERVKQAYPRLRIHLQTPSLSLAEQEKQFGAELWKTDPNKCCELRKIIPLRQAMTGKKAWISGLRREQSPTRQHVEFINLDKKFQNIKVCPLIHWTWKDVWRYVHRHNLSYNPLHDRGYPSIGCAPCTAPAYTEEDLRSGRWAGLGKTECGLHES</sequence>
<feature type="chain" id="PRO_1000116943" description="Adenosine 5'-phosphosulfate reductase">
    <location>
        <begin position="1"/>
        <end position="235"/>
    </location>
</feature>
<feature type="active site" description="Nucleophile; cysteine thiosulfonate intermediate" evidence="1">
    <location>
        <position position="230"/>
    </location>
</feature>
<feature type="binding site" evidence="1">
    <location>
        <position position="121"/>
    </location>
    <ligand>
        <name>[4Fe-4S] cluster</name>
        <dbReference type="ChEBI" id="CHEBI:49883"/>
    </ligand>
</feature>
<feature type="binding site" evidence="1">
    <location>
        <position position="122"/>
    </location>
    <ligand>
        <name>[4Fe-4S] cluster</name>
        <dbReference type="ChEBI" id="CHEBI:49883"/>
    </ligand>
</feature>
<feature type="binding site" evidence="1">
    <location>
        <position position="204"/>
    </location>
    <ligand>
        <name>[4Fe-4S] cluster</name>
        <dbReference type="ChEBI" id="CHEBI:49883"/>
    </ligand>
</feature>
<feature type="binding site" evidence="1">
    <location>
        <position position="207"/>
    </location>
    <ligand>
        <name>[4Fe-4S] cluster</name>
        <dbReference type="ChEBI" id="CHEBI:49883"/>
    </ligand>
</feature>
<protein>
    <recommendedName>
        <fullName evidence="1">Adenosine 5'-phosphosulfate reductase</fullName>
        <shortName evidence="1">APS reductase</shortName>
        <ecNumber evidence="1">1.8.4.10</ecNumber>
    </recommendedName>
    <alternativeName>
        <fullName evidence="1">5'-adenylylsulfate reductase</fullName>
    </alternativeName>
    <alternativeName>
        <fullName evidence="1">Thioredoxin-dependent 5'-adenylylsulfate reductase</fullName>
    </alternativeName>
</protein>
<gene>
    <name evidence="1" type="primary">cysH</name>
    <name type="ordered locus">Aflv_0316</name>
</gene>
<dbReference type="EC" id="1.8.4.10" evidence="1"/>
<dbReference type="EMBL" id="CP000922">
    <property type="protein sequence ID" value="ACJ32700.1"/>
    <property type="molecule type" value="Genomic_DNA"/>
</dbReference>
<dbReference type="RefSeq" id="WP_012574036.1">
    <property type="nucleotide sequence ID" value="NC_011567.1"/>
</dbReference>
<dbReference type="SMR" id="B7GG21"/>
<dbReference type="STRING" id="491915.Aflv_0316"/>
<dbReference type="GeneID" id="7036548"/>
<dbReference type="KEGG" id="afl:Aflv_0316"/>
<dbReference type="PATRIC" id="fig|491915.6.peg.323"/>
<dbReference type="eggNOG" id="COG0175">
    <property type="taxonomic scope" value="Bacteria"/>
</dbReference>
<dbReference type="HOGENOM" id="CLU_044089_2_1_9"/>
<dbReference type="Proteomes" id="UP000000742">
    <property type="component" value="Chromosome"/>
</dbReference>
<dbReference type="GO" id="GO:0005737">
    <property type="term" value="C:cytoplasm"/>
    <property type="evidence" value="ECO:0007669"/>
    <property type="project" value="UniProtKB-SubCell"/>
</dbReference>
<dbReference type="GO" id="GO:0051539">
    <property type="term" value="F:4 iron, 4 sulfur cluster binding"/>
    <property type="evidence" value="ECO:0007669"/>
    <property type="project" value="UniProtKB-UniRule"/>
</dbReference>
<dbReference type="GO" id="GO:0043866">
    <property type="term" value="F:adenylyl-sulfate reductase (thioredoxin) activity"/>
    <property type="evidence" value="ECO:0007669"/>
    <property type="project" value="UniProtKB-EC"/>
</dbReference>
<dbReference type="GO" id="GO:0046872">
    <property type="term" value="F:metal ion binding"/>
    <property type="evidence" value="ECO:0007669"/>
    <property type="project" value="UniProtKB-KW"/>
</dbReference>
<dbReference type="GO" id="GO:0004604">
    <property type="term" value="F:phosphoadenylyl-sulfate reductase (thioredoxin) activity"/>
    <property type="evidence" value="ECO:0007669"/>
    <property type="project" value="UniProtKB-UniRule"/>
</dbReference>
<dbReference type="GO" id="GO:0019344">
    <property type="term" value="P:cysteine biosynthetic process"/>
    <property type="evidence" value="ECO:0007669"/>
    <property type="project" value="InterPro"/>
</dbReference>
<dbReference type="GO" id="GO:0070814">
    <property type="term" value="P:hydrogen sulfide biosynthetic process"/>
    <property type="evidence" value="ECO:0007669"/>
    <property type="project" value="UniProtKB-UniRule"/>
</dbReference>
<dbReference type="GO" id="GO:0019379">
    <property type="term" value="P:sulfate assimilation, phosphoadenylyl sulfate reduction by phosphoadenylyl-sulfate reductase (thioredoxin)"/>
    <property type="evidence" value="ECO:0007669"/>
    <property type="project" value="UniProtKB-UniRule"/>
</dbReference>
<dbReference type="CDD" id="cd23945">
    <property type="entry name" value="PAPS_reductase"/>
    <property type="match status" value="1"/>
</dbReference>
<dbReference type="FunFam" id="3.40.50.620:FF:000095">
    <property type="entry name" value="Phosphoadenosine phosphosulfate reductase"/>
    <property type="match status" value="1"/>
</dbReference>
<dbReference type="Gene3D" id="3.40.50.620">
    <property type="entry name" value="HUPs"/>
    <property type="match status" value="1"/>
</dbReference>
<dbReference type="HAMAP" id="MF_00063">
    <property type="entry name" value="CysH"/>
    <property type="match status" value="1"/>
</dbReference>
<dbReference type="InterPro" id="IPR011798">
    <property type="entry name" value="APS_reductase"/>
</dbReference>
<dbReference type="InterPro" id="IPR004511">
    <property type="entry name" value="PAPS/APS_Rdtase"/>
</dbReference>
<dbReference type="InterPro" id="IPR002500">
    <property type="entry name" value="PAPS_reduct_dom"/>
</dbReference>
<dbReference type="InterPro" id="IPR014729">
    <property type="entry name" value="Rossmann-like_a/b/a_fold"/>
</dbReference>
<dbReference type="NCBIfam" id="TIGR02055">
    <property type="entry name" value="APS_reductase"/>
    <property type="match status" value="1"/>
</dbReference>
<dbReference type="NCBIfam" id="TIGR00434">
    <property type="entry name" value="cysH"/>
    <property type="match status" value="1"/>
</dbReference>
<dbReference type="NCBIfam" id="NF002537">
    <property type="entry name" value="PRK02090.1"/>
    <property type="match status" value="1"/>
</dbReference>
<dbReference type="PANTHER" id="PTHR46509">
    <property type="entry name" value="PHOSPHOADENOSINE PHOSPHOSULFATE REDUCTASE"/>
    <property type="match status" value="1"/>
</dbReference>
<dbReference type="PANTHER" id="PTHR46509:SF1">
    <property type="entry name" value="PHOSPHOADENOSINE PHOSPHOSULFATE REDUCTASE"/>
    <property type="match status" value="1"/>
</dbReference>
<dbReference type="Pfam" id="PF01507">
    <property type="entry name" value="PAPS_reduct"/>
    <property type="match status" value="1"/>
</dbReference>
<dbReference type="PIRSF" id="PIRSF000857">
    <property type="entry name" value="PAPS_reductase"/>
    <property type="match status" value="1"/>
</dbReference>
<dbReference type="SUPFAM" id="SSF52402">
    <property type="entry name" value="Adenine nucleotide alpha hydrolases-like"/>
    <property type="match status" value="1"/>
</dbReference>